<gene>
    <name evidence="1" type="primary">ispF</name>
    <name type="ordered locus">LMOf2365_0248</name>
</gene>
<reference key="1">
    <citation type="journal article" date="2004" name="Nucleic Acids Res.">
        <title>Whole genome comparisons of serotype 4b and 1/2a strains of the food-borne pathogen Listeria monocytogenes reveal new insights into the core genome components of this species.</title>
        <authorList>
            <person name="Nelson K.E."/>
            <person name="Fouts D.E."/>
            <person name="Mongodin E.F."/>
            <person name="Ravel J."/>
            <person name="DeBoy R.T."/>
            <person name="Kolonay J.F."/>
            <person name="Rasko D.A."/>
            <person name="Angiuoli S.V."/>
            <person name="Gill S.R."/>
            <person name="Paulsen I.T."/>
            <person name="Peterson J.D."/>
            <person name="White O."/>
            <person name="Nelson W.C."/>
            <person name="Nierman W.C."/>
            <person name="Beanan M.J."/>
            <person name="Brinkac L.M."/>
            <person name="Daugherty S.C."/>
            <person name="Dodson R.J."/>
            <person name="Durkin A.S."/>
            <person name="Madupu R."/>
            <person name="Haft D.H."/>
            <person name="Selengut J."/>
            <person name="Van Aken S.E."/>
            <person name="Khouri H.M."/>
            <person name="Fedorova N."/>
            <person name="Forberger H.A."/>
            <person name="Tran B."/>
            <person name="Kathariou S."/>
            <person name="Wonderling L.D."/>
            <person name="Uhlich G.A."/>
            <person name="Bayles D.O."/>
            <person name="Luchansky J.B."/>
            <person name="Fraser C.M."/>
        </authorList>
    </citation>
    <scope>NUCLEOTIDE SEQUENCE [LARGE SCALE GENOMIC DNA]</scope>
    <source>
        <strain>F2365</strain>
    </source>
</reference>
<keyword id="KW-0414">Isoprene biosynthesis</keyword>
<keyword id="KW-0456">Lyase</keyword>
<keyword id="KW-0479">Metal-binding</keyword>
<evidence type="ECO:0000255" key="1">
    <source>
        <dbReference type="HAMAP-Rule" id="MF_00107"/>
    </source>
</evidence>
<sequence length="157" mass="17074">MIRIGQGYDVHKLAYDRELIVGGIKIPYEKGLLGHSDADVLLHAITDAIIGAIGAGDIGHFFPDTDMAFKDADSAELLEEIWQKVEADGFRLGNLDATIIAEKPKMAPYVEQMKLRIAELLHADSAQVNVKATTTEKLGFTGREEGIASLAVVLLEK</sequence>
<feature type="chain" id="PRO_0000189477" description="2-C-methyl-D-erythritol 2,4-cyclodiphosphate synthase">
    <location>
        <begin position="1"/>
        <end position="157"/>
    </location>
</feature>
<feature type="binding site" evidence="1">
    <location>
        <begin position="9"/>
        <end position="11"/>
    </location>
    <ligand>
        <name>4-CDP-2-C-methyl-D-erythritol 2-phosphate</name>
        <dbReference type="ChEBI" id="CHEBI:57919"/>
    </ligand>
</feature>
<feature type="binding site" evidence="1">
    <location>
        <position position="9"/>
    </location>
    <ligand>
        <name>a divalent metal cation</name>
        <dbReference type="ChEBI" id="CHEBI:60240"/>
    </ligand>
</feature>
<feature type="binding site" evidence="1">
    <location>
        <position position="11"/>
    </location>
    <ligand>
        <name>a divalent metal cation</name>
        <dbReference type="ChEBI" id="CHEBI:60240"/>
    </ligand>
</feature>
<feature type="binding site" evidence="1">
    <location>
        <begin position="35"/>
        <end position="36"/>
    </location>
    <ligand>
        <name>4-CDP-2-C-methyl-D-erythritol 2-phosphate</name>
        <dbReference type="ChEBI" id="CHEBI:57919"/>
    </ligand>
</feature>
<feature type="binding site" evidence="1">
    <location>
        <position position="43"/>
    </location>
    <ligand>
        <name>a divalent metal cation</name>
        <dbReference type="ChEBI" id="CHEBI:60240"/>
    </ligand>
</feature>
<feature type="binding site" evidence="1">
    <location>
        <begin position="57"/>
        <end position="59"/>
    </location>
    <ligand>
        <name>4-CDP-2-C-methyl-D-erythritol 2-phosphate</name>
        <dbReference type="ChEBI" id="CHEBI:57919"/>
    </ligand>
</feature>
<feature type="binding site" evidence="1">
    <location>
        <begin position="62"/>
        <end position="66"/>
    </location>
    <ligand>
        <name>4-CDP-2-C-methyl-D-erythritol 2-phosphate</name>
        <dbReference type="ChEBI" id="CHEBI:57919"/>
    </ligand>
</feature>
<feature type="binding site" evidence="1">
    <location>
        <begin position="101"/>
        <end position="107"/>
    </location>
    <ligand>
        <name>4-CDP-2-C-methyl-D-erythritol 2-phosphate</name>
        <dbReference type="ChEBI" id="CHEBI:57919"/>
    </ligand>
</feature>
<feature type="binding site" evidence="1">
    <location>
        <begin position="133"/>
        <end position="136"/>
    </location>
    <ligand>
        <name>4-CDP-2-C-methyl-D-erythritol 2-phosphate</name>
        <dbReference type="ChEBI" id="CHEBI:57919"/>
    </ligand>
</feature>
<feature type="binding site" evidence="1">
    <location>
        <position position="140"/>
    </location>
    <ligand>
        <name>4-CDP-2-C-methyl-D-erythritol 2-phosphate</name>
        <dbReference type="ChEBI" id="CHEBI:57919"/>
    </ligand>
</feature>
<feature type="binding site" evidence="1">
    <location>
        <position position="143"/>
    </location>
    <ligand>
        <name>4-CDP-2-C-methyl-D-erythritol 2-phosphate</name>
        <dbReference type="ChEBI" id="CHEBI:57919"/>
    </ligand>
</feature>
<feature type="site" description="Transition state stabilizer" evidence="1">
    <location>
        <position position="35"/>
    </location>
</feature>
<feature type="site" description="Transition state stabilizer" evidence="1">
    <location>
        <position position="134"/>
    </location>
</feature>
<comment type="function">
    <text evidence="1">Involved in the biosynthesis of isopentenyl diphosphate (IPP) and dimethylallyl diphosphate (DMAPP), two major building blocks of isoprenoid compounds. Catalyzes the conversion of 4-diphosphocytidyl-2-C-methyl-D-erythritol 2-phosphate (CDP-ME2P) to 2-C-methyl-D-erythritol 2,4-cyclodiphosphate (ME-CPP) with a corresponding release of cytidine 5-monophosphate (CMP).</text>
</comment>
<comment type="catalytic activity">
    <reaction evidence="1">
        <text>4-CDP-2-C-methyl-D-erythritol 2-phosphate = 2-C-methyl-D-erythritol 2,4-cyclic diphosphate + CMP</text>
        <dbReference type="Rhea" id="RHEA:23864"/>
        <dbReference type="ChEBI" id="CHEBI:57919"/>
        <dbReference type="ChEBI" id="CHEBI:58483"/>
        <dbReference type="ChEBI" id="CHEBI:60377"/>
        <dbReference type="EC" id="4.6.1.12"/>
    </reaction>
</comment>
<comment type="cofactor">
    <cofactor evidence="1">
        <name>a divalent metal cation</name>
        <dbReference type="ChEBI" id="CHEBI:60240"/>
    </cofactor>
    <text evidence="1">Binds 1 divalent metal cation per subunit.</text>
</comment>
<comment type="pathway">
    <text evidence="1">Isoprenoid biosynthesis; isopentenyl diphosphate biosynthesis via DXP pathway; isopentenyl diphosphate from 1-deoxy-D-xylulose 5-phosphate: step 4/6.</text>
</comment>
<comment type="subunit">
    <text evidence="1">Homotrimer.</text>
</comment>
<comment type="similarity">
    <text evidence="1">Belongs to the IspF family.</text>
</comment>
<name>ISPF_LISMF</name>
<proteinExistence type="inferred from homology"/>
<organism>
    <name type="scientific">Listeria monocytogenes serotype 4b (strain F2365)</name>
    <dbReference type="NCBI Taxonomy" id="265669"/>
    <lineage>
        <taxon>Bacteria</taxon>
        <taxon>Bacillati</taxon>
        <taxon>Bacillota</taxon>
        <taxon>Bacilli</taxon>
        <taxon>Bacillales</taxon>
        <taxon>Listeriaceae</taxon>
        <taxon>Listeria</taxon>
    </lineage>
</organism>
<protein>
    <recommendedName>
        <fullName evidence="1">2-C-methyl-D-erythritol 2,4-cyclodiphosphate synthase</fullName>
        <shortName evidence="1">MECDP-synthase</shortName>
        <shortName evidence="1">MECPP-synthase</shortName>
        <shortName evidence="1">MECPS</shortName>
        <ecNumber evidence="1">4.6.1.12</ecNumber>
    </recommendedName>
</protein>
<dbReference type="EC" id="4.6.1.12" evidence="1"/>
<dbReference type="EMBL" id="AE017262">
    <property type="protein sequence ID" value="AAT03035.1"/>
    <property type="molecule type" value="Genomic_DNA"/>
</dbReference>
<dbReference type="RefSeq" id="WP_003728083.1">
    <property type="nucleotide sequence ID" value="NC_002973.6"/>
</dbReference>
<dbReference type="SMR" id="Q724H6"/>
<dbReference type="KEGG" id="lmf:LMOf2365_0248"/>
<dbReference type="HOGENOM" id="CLU_084630_2_0_9"/>
<dbReference type="UniPathway" id="UPA00056">
    <property type="reaction ID" value="UER00095"/>
</dbReference>
<dbReference type="GO" id="GO:0008685">
    <property type="term" value="F:2-C-methyl-D-erythritol 2,4-cyclodiphosphate synthase activity"/>
    <property type="evidence" value="ECO:0007669"/>
    <property type="project" value="UniProtKB-UniRule"/>
</dbReference>
<dbReference type="GO" id="GO:0046872">
    <property type="term" value="F:metal ion binding"/>
    <property type="evidence" value="ECO:0007669"/>
    <property type="project" value="UniProtKB-KW"/>
</dbReference>
<dbReference type="GO" id="GO:0019288">
    <property type="term" value="P:isopentenyl diphosphate biosynthetic process, methylerythritol 4-phosphate pathway"/>
    <property type="evidence" value="ECO:0007669"/>
    <property type="project" value="UniProtKB-UniRule"/>
</dbReference>
<dbReference type="GO" id="GO:0016114">
    <property type="term" value="P:terpenoid biosynthetic process"/>
    <property type="evidence" value="ECO:0007669"/>
    <property type="project" value="InterPro"/>
</dbReference>
<dbReference type="CDD" id="cd00554">
    <property type="entry name" value="MECDP_synthase"/>
    <property type="match status" value="1"/>
</dbReference>
<dbReference type="FunFam" id="3.30.1330.50:FF:000001">
    <property type="entry name" value="2-C-methyl-D-erythritol 2,4-cyclodiphosphate synthase"/>
    <property type="match status" value="1"/>
</dbReference>
<dbReference type="Gene3D" id="3.30.1330.50">
    <property type="entry name" value="2-C-methyl-D-erythritol 2,4-cyclodiphosphate synthase"/>
    <property type="match status" value="1"/>
</dbReference>
<dbReference type="HAMAP" id="MF_00107">
    <property type="entry name" value="IspF"/>
    <property type="match status" value="1"/>
</dbReference>
<dbReference type="InterPro" id="IPR003526">
    <property type="entry name" value="MECDP_synthase"/>
</dbReference>
<dbReference type="InterPro" id="IPR020555">
    <property type="entry name" value="MECDP_synthase_CS"/>
</dbReference>
<dbReference type="InterPro" id="IPR036571">
    <property type="entry name" value="MECDP_synthase_sf"/>
</dbReference>
<dbReference type="NCBIfam" id="TIGR00151">
    <property type="entry name" value="ispF"/>
    <property type="match status" value="1"/>
</dbReference>
<dbReference type="PANTHER" id="PTHR43181">
    <property type="entry name" value="2-C-METHYL-D-ERYTHRITOL 2,4-CYCLODIPHOSPHATE SYNTHASE, CHLOROPLASTIC"/>
    <property type="match status" value="1"/>
</dbReference>
<dbReference type="PANTHER" id="PTHR43181:SF1">
    <property type="entry name" value="2-C-METHYL-D-ERYTHRITOL 2,4-CYCLODIPHOSPHATE SYNTHASE, CHLOROPLASTIC"/>
    <property type="match status" value="1"/>
</dbReference>
<dbReference type="Pfam" id="PF02542">
    <property type="entry name" value="YgbB"/>
    <property type="match status" value="1"/>
</dbReference>
<dbReference type="SUPFAM" id="SSF69765">
    <property type="entry name" value="IpsF-like"/>
    <property type="match status" value="1"/>
</dbReference>
<dbReference type="PROSITE" id="PS01350">
    <property type="entry name" value="ISPF"/>
    <property type="match status" value="1"/>
</dbReference>
<accession>Q724H6</accession>